<dbReference type="EMBL" id="CP001173">
    <property type="protein sequence ID" value="ACI27146.1"/>
    <property type="molecule type" value="Genomic_DNA"/>
</dbReference>
<dbReference type="RefSeq" id="WP_000991164.1">
    <property type="nucleotide sequence ID" value="NC_011333.1"/>
</dbReference>
<dbReference type="SMR" id="B5Z6E7"/>
<dbReference type="KEGG" id="hpg:HPG27_381"/>
<dbReference type="HOGENOM" id="CLU_089475_6_5_7"/>
<dbReference type="Proteomes" id="UP000001735">
    <property type="component" value="Chromosome"/>
</dbReference>
<dbReference type="GO" id="GO:0005737">
    <property type="term" value="C:cytoplasm"/>
    <property type="evidence" value="ECO:0007669"/>
    <property type="project" value="UniProtKB-SubCell"/>
</dbReference>
<dbReference type="GO" id="GO:0030490">
    <property type="term" value="P:maturation of SSU-rRNA"/>
    <property type="evidence" value="ECO:0007669"/>
    <property type="project" value="UniProtKB-UniRule"/>
</dbReference>
<dbReference type="Gene3D" id="3.30.300.20">
    <property type="match status" value="1"/>
</dbReference>
<dbReference type="HAMAP" id="MF_00003">
    <property type="entry name" value="RbfA"/>
    <property type="match status" value="1"/>
</dbReference>
<dbReference type="InterPro" id="IPR015946">
    <property type="entry name" value="KH_dom-like_a/b"/>
</dbReference>
<dbReference type="InterPro" id="IPR000238">
    <property type="entry name" value="RbfA"/>
</dbReference>
<dbReference type="InterPro" id="IPR023799">
    <property type="entry name" value="RbfA_dom_sf"/>
</dbReference>
<dbReference type="InterPro" id="IPR020053">
    <property type="entry name" value="Ribosome-bd_factorA_CS"/>
</dbReference>
<dbReference type="NCBIfam" id="TIGR00082">
    <property type="entry name" value="rbfA"/>
    <property type="match status" value="1"/>
</dbReference>
<dbReference type="Pfam" id="PF02033">
    <property type="entry name" value="RBFA"/>
    <property type="match status" value="1"/>
</dbReference>
<dbReference type="SUPFAM" id="SSF89919">
    <property type="entry name" value="Ribosome-binding factor A, RbfA"/>
    <property type="match status" value="1"/>
</dbReference>
<dbReference type="PROSITE" id="PS01319">
    <property type="entry name" value="RBFA"/>
    <property type="match status" value="1"/>
</dbReference>
<keyword id="KW-0963">Cytoplasm</keyword>
<keyword id="KW-1185">Reference proteome</keyword>
<keyword id="KW-0690">Ribosome biogenesis</keyword>
<comment type="function">
    <text evidence="1">One of several proteins that assist in the late maturation steps of the functional core of the 30S ribosomal subunit. Associates with free 30S ribosomal subunits (but not with 30S subunits that are part of 70S ribosomes or polysomes). Required for efficient processing of 16S rRNA. May interact with the 5'-terminal helix region of 16S rRNA.</text>
</comment>
<comment type="subunit">
    <text evidence="1">Monomer. Binds 30S ribosomal subunits, but not 50S ribosomal subunits or 70S ribosomes.</text>
</comment>
<comment type="subcellular location">
    <subcellularLocation>
        <location evidence="1">Cytoplasm</location>
    </subcellularLocation>
</comment>
<comment type="similarity">
    <text evidence="1">Belongs to the RbfA family.</text>
</comment>
<proteinExistence type="inferred from homology"/>
<evidence type="ECO:0000255" key="1">
    <source>
        <dbReference type="HAMAP-Rule" id="MF_00003"/>
    </source>
</evidence>
<feature type="chain" id="PRO_1000088894" description="Ribosome-binding factor A">
    <location>
        <begin position="1"/>
        <end position="111"/>
    </location>
</feature>
<protein>
    <recommendedName>
        <fullName evidence="1">Ribosome-binding factor A</fullName>
    </recommendedName>
</protein>
<organism>
    <name type="scientific">Helicobacter pylori (strain G27)</name>
    <dbReference type="NCBI Taxonomy" id="563041"/>
    <lineage>
        <taxon>Bacteria</taxon>
        <taxon>Pseudomonadati</taxon>
        <taxon>Campylobacterota</taxon>
        <taxon>Epsilonproteobacteria</taxon>
        <taxon>Campylobacterales</taxon>
        <taxon>Helicobacteraceae</taxon>
        <taxon>Helicobacter</taxon>
    </lineage>
</organism>
<accession>B5Z6E7</accession>
<reference key="1">
    <citation type="journal article" date="2009" name="J. Bacteriol.">
        <title>The complete genome sequence of Helicobacter pylori strain G27.</title>
        <authorList>
            <person name="Baltrus D.A."/>
            <person name="Amieva M.R."/>
            <person name="Covacci A."/>
            <person name="Lowe T.M."/>
            <person name="Merrell D.S."/>
            <person name="Ottemann K.M."/>
            <person name="Stein M."/>
            <person name="Salama N.R."/>
            <person name="Guillemin K."/>
        </authorList>
    </citation>
    <scope>NUCLEOTIDE SEQUENCE [LARGE SCALE GENOMIC DNA]</scope>
    <source>
        <strain>G27</strain>
    </source>
</reference>
<sequence length="111" mass="12437">MNAHKERLESNLLELLQEALASLNDGELNSLSVTKVECSKGKHHAYVFVLSSDHKILSKLKKAEGLIRQFVLQASGWFKCPKLSFVLDNSLEKQLRLDAIFNEIAKGKGND</sequence>
<gene>
    <name evidence="1" type="primary">rbfA</name>
    <name type="ordered locus">HPG27_381</name>
</gene>
<name>RBFA_HELPG</name>